<accession>P34656</accession>
<feature type="chain" id="PRO_0000065526" description="Uncharacterized protein ZK632.11">
    <location>
        <begin position="1"/>
        <end position="453"/>
    </location>
</feature>
<feature type="region of interest" description="Disordered" evidence="1">
    <location>
        <begin position="15"/>
        <end position="42"/>
    </location>
</feature>
<feature type="region of interest" description="Disordered" evidence="1">
    <location>
        <begin position="425"/>
        <end position="453"/>
    </location>
</feature>
<feature type="compositionally biased region" description="Polar residues" evidence="1">
    <location>
        <begin position="425"/>
        <end position="437"/>
    </location>
</feature>
<feature type="compositionally biased region" description="Basic residues" evidence="1">
    <location>
        <begin position="443"/>
        <end position="453"/>
    </location>
</feature>
<protein>
    <recommendedName>
        <fullName>Uncharacterized protein ZK632.11</fullName>
    </recommendedName>
</protein>
<sequence>MSDIEIIEEIQPVSLKRKQPSTSFNGKRKRTSSGLIEKSETMKGTETEFEKFVIDRTITPQRKLNAEDVEKSGEDIGSSEWRKRLECTLLGSVSTPVTVKKENNIRKKISCFNCDGEHNLRDCTQRKDFRRISRKKRESGDGRQRVFYNDVGISKQREKHFKPGVISDRLRAALGLRGNDIPEHIYRMRRLGLIDGYPPGWLRKSIKSTDQLKFFDSTSKEDDEMSVKPPELDTSKIVWYPGFNGEQSSLNDREDFKIPPRDVFCSVYQDELLKIFKKSEKAEKRRAKSTPKHKKFANEDDDDVIVITSDEIKIDKFNTPGEEDSIIILDGSASTEEKHLLTPIRKDVKLGESMFELIGTPVFGSSLLTPVAPLEAFAVGIQPFEAREELTGCKGNFRNLMDKLKEIRENNFVPEPEEEVILVSTNEISSSNNSGTAKNKNNQNRKRNRRHAK</sequence>
<reference key="1">
    <citation type="journal article" date="1994" name="Nature">
        <title>2.2 Mb of contiguous nucleotide sequence from chromosome III of C. elegans.</title>
        <authorList>
            <person name="Wilson R."/>
            <person name="Ainscough R."/>
            <person name="Anderson K."/>
            <person name="Baynes C."/>
            <person name="Berks M."/>
            <person name="Bonfield J."/>
            <person name="Burton J."/>
            <person name="Connell M."/>
            <person name="Copsey T."/>
            <person name="Cooper J."/>
            <person name="Coulson A."/>
            <person name="Craxton M."/>
            <person name="Dear S."/>
            <person name="Du Z."/>
            <person name="Durbin R."/>
            <person name="Favello A."/>
            <person name="Fraser A."/>
            <person name="Fulton L."/>
            <person name="Gardner A."/>
            <person name="Green P."/>
            <person name="Hawkins T."/>
            <person name="Hillier L."/>
            <person name="Jier M."/>
            <person name="Johnston L."/>
            <person name="Jones M."/>
            <person name="Kershaw J."/>
            <person name="Kirsten J."/>
            <person name="Laisster N."/>
            <person name="Latreille P."/>
            <person name="Lightning J."/>
            <person name="Lloyd C."/>
            <person name="Mortimore B."/>
            <person name="O'Callaghan M."/>
            <person name="Parsons J."/>
            <person name="Percy C."/>
            <person name="Rifken L."/>
            <person name="Roopra A."/>
            <person name="Saunders D."/>
            <person name="Shownkeen R."/>
            <person name="Sims M."/>
            <person name="Smaldon N."/>
            <person name="Smith A."/>
            <person name="Smith M."/>
            <person name="Sonnhammer E."/>
            <person name="Staden R."/>
            <person name="Sulston J."/>
            <person name="Thierry-Mieg J."/>
            <person name="Thomas K."/>
            <person name="Vaudin M."/>
            <person name="Vaughan K."/>
            <person name="Waterston R."/>
            <person name="Watson A."/>
            <person name="Weinstock L."/>
            <person name="Wilkinson-Sproat J."/>
            <person name="Wohldman P."/>
        </authorList>
    </citation>
    <scope>NUCLEOTIDE SEQUENCE [LARGE SCALE GENOMIC DNA]</scope>
    <source>
        <strain>Bristol N2</strain>
    </source>
</reference>
<reference key="2">
    <citation type="journal article" date="1998" name="Science">
        <title>Genome sequence of the nematode C. elegans: a platform for investigating biology.</title>
        <authorList>
            <consortium name="The C. elegans sequencing consortium"/>
        </authorList>
    </citation>
    <scope>NUCLEOTIDE SEQUENCE [LARGE SCALE GENOMIC DNA]</scope>
    <source>
        <strain>Bristol N2</strain>
    </source>
</reference>
<evidence type="ECO:0000256" key="1">
    <source>
        <dbReference type="SAM" id="MobiDB-lite"/>
    </source>
</evidence>
<proteinExistence type="predicted"/>
<organism>
    <name type="scientific">Caenorhabditis elegans</name>
    <dbReference type="NCBI Taxonomy" id="6239"/>
    <lineage>
        <taxon>Eukaryota</taxon>
        <taxon>Metazoa</taxon>
        <taxon>Ecdysozoa</taxon>
        <taxon>Nematoda</taxon>
        <taxon>Chromadorea</taxon>
        <taxon>Rhabditida</taxon>
        <taxon>Rhabditina</taxon>
        <taxon>Rhabditomorpha</taxon>
        <taxon>Rhabditoidea</taxon>
        <taxon>Rhabditidae</taxon>
        <taxon>Peloderinae</taxon>
        <taxon>Caenorhabditis</taxon>
    </lineage>
</organism>
<name>YOTA_CAEEL</name>
<gene>
    <name type="ORF">ZK632.11</name>
</gene>
<keyword id="KW-1185">Reference proteome</keyword>
<dbReference type="EMBL" id="Z22181">
    <property type="protein sequence ID" value="CAA80186.1"/>
    <property type="molecule type" value="Genomic_DNA"/>
</dbReference>
<dbReference type="PIR" id="S40943">
    <property type="entry name" value="S40943"/>
</dbReference>
<dbReference type="RefSeq" id="NP_499182.1">
    <property type="nucleotide sequence ID" value="NM_066781.8"/>
</dbReference>
<dbReference type="BioGRID" id="41590">
    <property type="interactions" value="5"/>
</dbReference>
<dbReference type="FunCoup" id="P34656">
    <property type="interactions" value="47"/>
</dbReference>
<dbReference type="STRING" id="6239.ZK632.11.1"/>
<dbReference type="iPTMnet" id="P34656"/>
<dbReference type="PaxDb" id="6239-ZK632.11"/>
<dbReference type="PeptideAtlas" id="P34656"/>
<dbReference type="EnsemblMetazoa" id="ZK632.11.1">
    <property type="protein sequence ID" value="ZK632.11.1"/>
    <property type="gene ID" value="WBGene00014018"/>
</dbReference>
<dbReference type="GeneID" id="176396"/>
<dbReference type="KEGG" id="cel:CELE_ZK632.11"/>
<dbReference type="UCSC" id="ZK632.11">
    <property type="organism name" value="c. elegans"/>
</dbReference>
<dbReference type="AGR" id="WB:WBGene00014018"/>
<dbReference type="CTD" id="176396"/>
<dbReference type="WormBase" id="ZK632.11">
    <property type="protein sequence ID" value="CE00417"/>
    <property type="gene ID" value="WBGene00014018"/>
</dbReference>
<dbReference type="eggNOG" id="KOG2673">
    <property type="taxonomic scope" value="Eukaryota"/>
</dbReference>
<dbReference type="GeneTree" id="ENSGT00390000011475"/>
<dbReference type="HOGENOM" id="CLU_048943_0_0_1"/>
<dbReference type="InParanoid" id="P34656"/>
<dbReference type="OMA" id="HVYRMRR"/>
<dbReference type="OrthoDB" id="8026949at2759"/>
<dbReference type="PhylomeDB" id="P34656"/>
<dbReference type="PRO" id="PR:P34656"/>
<dbReference type="Proteomes" id="UP000001940">
    <property type="component" value="Chromosome III"/>
</dbReference>
<dbReference type="Bgee" id="WBGene00014018">
    <property type="expression patterns" value="Expressed in germ line (C elegans) and 4 other cell types or tissues"/>
</dbReference>
<dbReference type="GO" id="GO:0071013">
    <property type="term" value="C:catalytic step 2 spliceosome"/>
    <property type="evidence" value="ECO:0000318"/>
    <property type="project" value="GO_Central"/>
</dbReference>
<dbReference type="GO" id="GO:0003723">
    <property type="term" value="F:RNA binding"/>
    <property type="evidence" value="ECO:0000318"/>
    <property type="project" value="GO_Central"/>
</dbReference>
<dbReference type="GO" id="GO:0006396">
    <property type="term" value="P:RNA processing"/>
    <property type="evidence" value="ECO:0000318"/>
    <property type="project" value="GO_Central"/>
</dbReference>
<dbReference type="InterPro" id="IPR052115">
    <property type="entry name" value="NEXT_complex_subunit_ZCCHC8"/>
</dbReference>
<dbReference type="InterPro" id="IPR006568">
    <property type="entry name" value="PSP_pro-rich"/>
</dbReference>
<dbReference type="PANTHER" id="PTHR13316:SF6">
    <property type="entry name" value="PROTEIN CBG09981"/>
    <property type="match status" value="1"/>
</dbReference>
<dbReference type="PANTHER" id="PTHR13316">
    <property type="entry name" value="ZINC FINGER, CCHC DOMAIN CONTAINING 8"/>
    <property type="match status" value="1"/>
</dbReference>
<dbReference type="Pfam" id="PF04046">
    <property type="entry name" value="PSP"/>
    <property type="match status" value="1"/>
</dbReference>
<dbReference type="SMART" id="SM00581">
    <property type="entry name" value="PSP"/>
    <property type="match status" value="1"/>
</dbReference>